<accession>B2K0R7</accession>
<proteinExistence type="inferred from homology"/>
<name>ARGO_YERPB</name>
<dbReference type="EMBL" id="CP001048">
    <property type="protein sequence ID" value="ACC90280.1"/>
    <property type="molecule type" value="Genomic_DNA"/>
</dbReference>
<dbReference type="RefSeq" id="WP_002209960.1">
    <property type="nucleotide sequence ID" value="NZ_CP009780.1"/>
</dbReference>
<dbReference type="GeneID" id="57973722"/>
<dbReference type="KEGG" id="ypb:YPTS_3325"/>
<dbReference type="PATRIC" id="fig|502801.10.peg.2765"/>
<dbReference type="GO" id="GO:0005886">
    <property type="term" value="C:plasma membrane"/>
    <property type="evidence" value="ECO:0007669"/>
    <property type="project" value="UniProtKB-SubCell"/>
</dbReference>
<dbReference type="GO" id="GO:0061459">
    <property type="term" value="F:L-arginine transmembrane transporter activity"/>
    <property type="evidence" value="ECO:0007669"/>
    <property type="project" value="UniProtKB-UniRule"/>
</dbReference>
<dbReference type="HAMAP" id="MF_01901">
    <property type="entry name" value="ArgO"/>
    <property type="match status" value="1"/>
</dbReference>
<dbReference type="InterPro" id="IPR023445">
    <property type="entry name" value="Arg_export_ArgO_enterobac"/>
</dbReference>
<dbReference type="InterPro" id="IPR001123">
    <property type="entry name" value="LeuE-type"/>
</dbReference>
<dbReference type="InterPro" id="IPR004777">
    <property type="entry name" value="Lys/arg_exporter"/>
</dbReference>
<dbReference type="NCBIfam" id="TIGR00948">
    <property type="entry name" value="2a75"/>
    <property type="match status" value="1"/>
</dbReference>
<dbReference type="NCBIfam" id="NF006801">
    <property type="entry name" value="PRK09304.1"/>
    <property type="match status" value="1"/>
</dbReference>
<dbReference type="PANTHER" id="PTHR30086">
    <property type="entry name" value="ARGININE EXPORTER PROTEIN ARGO"/>
    <property type="match status" value="1"/>
</dbReference>
<dbReference type="PANTHER" id="PTHR30086:SF20">
    <property type="entry name" value="ARGININE EXPORTER PROTEIN ARGO-RELATED"/>
    <property type="match status" value="1"/>
</dbReference>
<dbReference type="Pfam" id="PF01810">
    <property type="entry name" value="LysE"/>
    <property type="match status" value="1"/>
</dbReference>
<feature type="chain" id="PRO_1000188726" description="Arginine exporter protein ArgO">
    <location>
        <begin position="1"/>
        <end position="205"/>
    </location>
</feature>
<feature type="transmembrane region" description="Helical" evidence="1">
    <location>
        <begin position="1"/>
        <end position="21"/>
    </location>
</feature>
<feature type="transmembrane region" description="Helical" evidence="1">
    <location>
        <begin position="42"/>
        <end position="62"/>
    </location>
</feature>
<feature type="transmembrane region" description="Helical" evidence="1">
    <location>
        <begin position="67"/>
        <end position="87"/>
    </location>
</feature>
<feature type="transmembrane region" description="Helical" evidence="1">
    <location>
        <begin position="111"/>
        <end position="131"/>
    </location>
</feature>
<feature type="transmembrane region" description="Helical" evidence="1">
    <location>
        <begin position="147"/>
        <end position="167"/>
    </location>
</feature>
<feature type="transmembrane region" description="Helical" evidence="1">
    <location>
        <begin position="185"/>
        <end position="205"/>
    </location>
</feature>
<reference key="1">
    <citation type="submission" date="2008-04" db="EMBL/GenBank/DDBJ databases">
        <title>Complete sequence of Yersinia pseudotuberculosis PB1/+.</title>
        <authorList>
            <person name="Copeland A."/>
            <person name="Lucas S."/>
            <person name="Lapidus A."/>
            <person name="Glavina del Rio T."/>
            <person name="Dalin E."/>
            <person name="Tice H."/>
            <person name="Bruce D."/>
            <person name="Goodwin L."/>
            <person name="Pitluck S."/>
            <person name="Munk A.C."/>
            <person name="Brettin T."/>
            <person name="Detter J.C."/>
            <person name="Han C."/>
            <person name="Tapia R."/>
            <person name="Schmutz J."/>
            <person name="Larimer F."/>
            <person name="Land M."/>
            <person name="Hauser L."/>
            <person name="Challacombe J.F."/>
            <person name="Green L."/>
            <person name="Lindler L.E."/>
            <person name="Nikolich M.P."/>
            <person name="Richardson P."/>
        </authorList>
    </citation>
    <scope>NUCLEOTIDE SEQUENCE [LARGE SCALE GENOMIC DNA]</scope>
    <source>
        <strain>PB1/+</strain>
    </source>
</reference>
<protein>
    <recommendedName>
        <fullName evidence="1">Arginine exporter protein ArgO</fullName>
    </recommendedName>
</protein>
<keyword id="KW-0029">Amino-acid transport</keyword>
<keyword id="KW-0997">Cell inner membrane</keyword>
<keyword id="KW-1003">Cell membrane</keyword>
<keyword id="KW-0472">Membrane</keyword>
<keyword id="KW-0812">Transmembrane</keyword>
<keyword id="KW-1133">Transmembrane helix</keyword>
<keyword id="KW-0813">Transport</keyword>
<organism>
    <name type="scientific">Yersinia pseudotuberculosis serotype IB (strain PB1/+)</name>
    <dbReference type="NCBI Taxonomy" id="502801"/>
    <lineage>
        <taxon>Bacteria</taxon>
        <taxon>Pseudomonadati</taxon>
        <taxon>Pseudomonadota</taxon>
        <taxon>Gammaproteobacteria</taxon>
        <taxon>Enterobacterales</taxon>
        <taxon>Yersiniaceae</taxon>
        <taxon>Yersinia</taxon>
    </lineage>
</organism>
<sequence length="205" mass="22164">MLAVYLHGFILSAAMILPLGPQNVFVMNQGIKRQHHLMSASLCALSDIILICAGIFGGSALLSRSPLLLALVTWGGVAFLMWYGWGALMAAWRGDGVASSATSVTQGRWRILVTLLAVTWLNPHVYLDTFVVLGSLGGQLLPDIRPWFALGAVTASIVWFFALALLAAWLSPWLNRPVAQRIINLFVGGVMGFIAFQLARQGFGL</sequence>
<gene>
    <name evidence="1" type="primary">argO</name>
    <name type="ordered locus">YPTS_3325</name>
</gene>
<evidence type="ECO:0000255" key="1">
    <source>
        <dbReference type="HAMAP-Rule" id="MF_01901"/>
    </source>
</evidence>
<comment type="function">
    <text evidence="1">Involved in the export of arginine. Important to control the intracellular level of arginine and the correct balance between arginine and lysine.</text>
</comment>
<comment type="catalytic activity">
    <reaction evidence="1">
        <text>L-arginine(in) = L-arginine(out)</text>
        <dbReference type="Rhea" id="RHEA:32143"/>
        <dbReference type="ChEBI" id="CHEBI:32682"/>
    </reaction>
    <physiologicalReaction direction="left-to-right" evidence="1">
        <dbReference type="Rhea" id="RHEA:32144"/>
    </physiologicalReaction>
</comment>
<comment type="subcellular location">
    <subcellularLocation>
        <location evidence="1">Cell inner membrane</location>
        <topology evidence="1">Multi-pass membrane protein</topology>
    </subcellularLocation>
</comment>
<comment type="similarity">
    <text evidence="1">Belongs to the LysE/ArgO transporter (TC 2.A.75) family.</text>
</comment>